<reference key="1">
    <citation type="journal article" date="2003" name="J. Bacteriol.">
        <title>Comparative analyses of the complete genome sequences of Pierce's disease and citrus variegated chlorosis strains of Xylella fastidiosa.</title>
        <authorList>
            <person name="Van Sluys M.A."/>
            <person name="de Oliveira M.C."/>
            <person name="Monteiro-Vitorello C.B."/>
            <person name="Miyaki C.Y."/>
            <person name="Furlan L.R."/>
            <person name="Camargo L.E.A."/>
            <person name="da Silva A.C.R."/>
            <person name="Moon D.H."/>
            <person name="Takita M.A."/>
            <person name="Lemos E.G.M."/>
            <person name="Machado M.A."/>
            <person name="Ferro M.I.T."/>
            <person name="da Silva F.R."/>
            <person name="Goldman M.H.S."/>
            <person name="Goldman G.H."/>
            <person name="Lemos M.V.F."/>
            <person name="El-Dorry H."/>
            <person name="Tsai S.M."/>
            <person name="Carrer H."/>
            <person name="Carraro D.M."/>
            <person name="de Oliveira R.C."/>
            <person name="Nunes L.R."/>
            <person name="Siqueira W.J."/>
            <person name="Coutinho L.L."/>
            <person name="Kimura E.T."/>
            <person name="Ferro E.S."/>
            <person name="Harakava R."/>
            <person name="Kuramae E.E."/>
            <person name="Marino C.L."/>
            <person name="Giglioti E."/>
            <person name="Abreu I.L."/>
            <person name="Alves L.M.C."/>
            <person name="do Amaral A.M."/>
            <person name="Baia G.S."/>
            <person name="Blanco S.R."/>
            <person name="Brito M.S."/>
            <person name="Cannavan F.S."/>
            <person name="Celestino A.V."/>
            <person name="da Cunha A.F."/>
            <person name="Fenille R.C."/>
            <person name="Ferro J.A."/>
            <person name="Formighieri E.F."/>
            <person name="Kishi L.T."/>
            <person name="Leoni S.G."/>
            <person name="Oliveira A.R."/>
            <person name="Rosa V.E. Jr."/>
            <person name="Sassaki F.T."/>
            <person name="Sena J.A.D."/>
            <person name="de Souza A.A."/>
            <person name="Truffi D."/>
            <person name="Tsukumo F."/>
            <person name="Yanai G.M."/>
            <person name="Zaros L.G."/>
            <person name="Civerolo E.L."/>
            <person name="Simpson A.J.G."/>
            <person name="Almeida N.F. Jr."/>
            <person name="Setubal J.C."/>
            <person name="Kitajima J.P."/>
        </authorList>
    </citation>
    <scope>NUCLEOTIDE SEQUENCE [LARGE SCALE GENOMIC DNA]</scope>
    <source>
        <strain>Temecula1 / ATCC 700964</strain>
    </source>
</reference>
<organism>
    <name type="scientific">Xylella fastidiosa (strain Temecula1 / ATCC 700964)</name>
    <dbReference type="NCBI Taxonomy" id="183190"/>
    <lineage>
        <taxon>Bacteria</taxon>
        <taxon>Pseudomonadati</taxon>
        <taxon>Pseudomonadota</taxon>
        <taxon>Gammaproteobacteria</taxon>
        <taxon>Lysobacterales</taxon>
        <taxon>Lysobacteraceae</taxon>
        <taxon>Xylella</taxon>
    </lineage>
</organism>
<name>HIS2_XYLFT</name>
<keyword id="KW-0028">Amino-acid biosynthesis</keyword>
<keyword id="KW-0067">ATP-binding</keyword>
<keyword id="KW-0963">Cytoplasm</keyword>
<keyword id="KW-0368">Histidine biosynthesis</keyword>
<keyword id="KW-0378">Hydrolase</keyword>
<keyword id="KW-0511">Multifunctional enzyme</keyword>
<keyword id="KW-0547">Nucleotide-binding</keyword>
<keyword id="KW-1185">Reference proteome</keyword>
<comment type="catalytic activity">
    <reaction>
        <text>1-(5-phospho-beta-D-ribosyl)-ATP + H2O = 1-(5-phospho-beta-D-ribosyl)-5'-AMP + diphosphate + H(+)</text>
        <dbReference type="Rhea" id="RHEA:22828"/>
        <dbReference type="ChEBI" id="CHEBI:15377"/>
        <dbReference type="ChEBI" id="CHEBI:15378"/>
        <dbReference type="ChEBI" id="CHEBI:33019"/>
        <dbReference type="ChEBI" id="CHEBI:59457"/>
        <dbReference type="ChEBI" id="CHEBI:73183"/>
        <dbReference type="EC" id="3.6.1.31"/>
    </reaction>
</comment>
<comment type="catalytic activity">
    <reaction>
        <text>1-(5-phospho-beta-D-ribosyl)-5'-AMP + H2O = 1-(5-phospho-beta-D-ribosyl)-5-[(5-phospho-beta-D-ribosylamino)methylideneamino]imidazole-4-carboxamide</text>
        <dbReference type="Rhea" id="RHEA:20049"/>
        <dbReference type="ChEBI" id="CHEBI:15377"/>
        <dbReference type="ChEBI" id="CHEBI:58435"/>
        <dbReference type="ChEBI" id="CHEBI:59457"/>
        <dbReference type="EC" id="3.5.4.19"/>
    </reaction>
</comment>
<comment type="pathway">
    <text>Amino-acid biosynthesis; L-histidine biosynthesis; L-histidine from 5-phospho-alpha-D-ribose 1-diphosphate: step 2/9.</text>
</comment>
<comment type="pathway">
    <text>Amino-acid biosynthesis; L-histidine biosynthesis; L-histidine from 5-phospho-alpha-D-ribose 1-diphosphate: step 3/9.</text>
</comment>
<comment type="subcellular location">
    <subcellularLocation>
        <location evidence="1">Cytoplasm</location>
    </subcellularLocation>
</comment>
<comment type="similarity">
    <text evidence="2">In the N-terminal section; belongs to the PRA-CH family.</text>
</comment>
<comment type="similarity">
    <text evidence="2">In the C-terminal section; belongs to the PRA-PH family.</text>
</comment>
<accession>Q87C35</accession>
<gene>
    <name type="primary">hisI</name>
    <name type="synonym">hisIE</name>
    <name type="ordered locus">PD_1261</name>
</gene>
<evidence type="ECO:0000250" key="1"/>
<evidence type="ECO:0000305" key="2"/>
<protein>
    <recommendedName>
        <fullName>Histidine biosynthesis bifunctional protein HisIE</fullName>
    </recommendedName>
    <domain>
        <recommendedName>
            <fullName>Phosphoribosyl-AMP cyclohydrolase</fullName>
            <shortName>PRA-CH</shortName>
            <ecNumber>3.5.4.19</ecNumber>
        </recommendedName>
    </domain>
    <domain>
        <recommendedName>
            <fullName>Phosphoribosyl-ATP pyrophosphatase</fullName>
            <shortName>PRA-PH</shortName>
            <ecNumber>3.6.1.31</ecNumber>
        </recommendedName>
    </domain>
</protein>
<proteinExistence type="inferred from homology"/>
<dbReference type="EC" id="3.5.4.19"/>
<dbReference type="EC" id="3.6.1.31"/>
<dbReference type="EMBL" id="AE009442">
    <property type="protein sequence ID" value="AAO29110.1"/>
    <property type="molecule type" value="Genomic_DNA"/>
</dbReference>
<dbReference type="RefSeq" id="WP_004088320.1">
    <property type="nucleotide sequence ID" value="NC_004556.1"/>
</dbReference>
<dbReference type="SMR" id="Q87C35"/>
<dbReference type="GeneID" id="93905072"/>
<dbReference type="KEGG" id="xft:PD_1261"/>
<dbReference type="HOGENOM" id="CLU_048577_3_1_6"/>
<dbReference type="UniPathway" id="UPA00031">
    <property type="reaction ID" value="UER00007"/>
</dbReference>
<dbReference type="UniPathway" id="UPA00031">
    <property type="reaction ID" value="UER00008"/>
</dbReference>
<dbReference type="Proteomes" id="UP000002516">
    <property type="component" value="Chromosome"/>
</dbReference>
<dbReference type="GO" id="GO:0005737">
    <property type="term" value="C:cytoplasm"/>
    <property type="evidence" value="ECO:0007669"/>
    <property type="project" value="UniProtKB-SubCell"/>
</dbReference>
<dbReference type="GO" id="GO:0005524">
    <property type="term" value="F:ATP binding"/>
    <property type="evidence" value="ECO:0007669"/>
    <property type="project" value="UniProtKB-KW"/>
</dbReference>
<dbReference type="GO" id="GO:0004635">
    <property type="term" value="F:phosphoribosyl-AMP cyclohydrolase activity"/>
    <property type="evidence" value="ECO:0007669"/>
    <property type="project" value="UniProtKB-UniRule"/>
</dbReference>
<dbReference type="GO" id="GO:0004636">
    <property type="term" value="F:phosphoribosyl-ATP diphosphatase activity"/>
    <property type="evidence" value="ECO:0007669"/>
    <property type="project" value="UniProtKB-UniRule"/>
</dbReference>
<dbReference type="GO" id="GO:0000105">
    <property type="term" value="P:L-histidine biosynthetic process"/>
    <property type="evidence" value="ECO:0007669"/>
    <property type="project" value="UniProtKB-UniRule"/>
</dbReference>
<dbReference type="CDD" id="cd11534">
    <property type="entry name" value="NTP-PPase_HisIE_like"/>
    <property type="match status" value="1"/>
</dbReference>
<dbReference type="FunFam" id="3.10.20.810:FF:000001">
    <property type="entry name" value="Histidine biosynthesis bifunctional protein HisIE"/>
    <property type="match status" value="1"/>
</dbReference>
<dbReference type="Gene3D" id="1.10.287.1080">
    <property type="entry name" value="MazG-like"/>
    <property type="match status" value="1"/>
</dbReference>
<dbReference type="Gene3D" id="3.10.20.810">
    <property type="entry name" value="Phosphoribosyl-AMP cyclohydrolase"/>
    <property type="match status" value="1"/>
</dbReference>
<dbReference type="HAMAP" id="MF_01020">
    <property type="entry name" value="HisE"/>
    <property type="match status" value="1"/>
</dbReference>
<dbReference type="HAMAP" id="MF_01019">
    <property type="entry name" value="HisIE"/>
    <property type="match status" value="1"/>
</dbReference>
<dbReference type="InterPro" id="IPR023019">
    <property type="entry name" value="His_synth_HisIE"/>
</dbReference>
<dbReference type="InterPro" id="IPR008179">
    <property type="entry name" value="HisE"/>
</dbReference>
<dbReference type="InterPro" id="IPR021130">
    <property type="entry name" value="PRib-ATP_PPHydrolase-like"/>
</dbReference>
<dbReference type="InterPro" id="IPR002496">
    <property type="entry name" value="PRib_AMP_CycHydrolase_dom"/>
</dbReference>
<dbReference type="InterPro" id="IPR038019">
    <property type="entry name" value="PRib_AMP_CycHydrolase_sf"/>
</dbReference>
<dbReference type="NCBIfam" id="TIGR03188">
    <property type="entry name" value="histidine_hisI"/>
    <property type="match status" value="1"/>
</dbReference>
<dbReference type="NCBIfam" id="NF002747">
    <property type="entry name" value="PRK02759.1"/>
    <property type="match status" value="1"/>
</dbReference>
<dbReference type="PANTHER" id="PTHR42945">
    <property type="entry name" value="HISTIDINE BIOSYNTHESIS BIFUNCTIONAL PROTEIN"/>
    <property type="match status" value="1"/>
</dbReference>
<dbReference type="PANTHER" id="PTHR42945:SF9">
    <property type="entry name" value="HISTIDINE BIOSYNTHESIS BIFUNCTIONAL PROTEIN HISIE"/>
    <property type="match status" value="1"/>
</dbReference>
<dbReference type="Pfam" id="PF01502">
    <property type="entry name" value="PRA-CH"/>
    <property type="match status" value="1"/>
</dbReference>
<dbReference type="Pfam" id="PF01503">
    <property type="entry name" value="PRA-PH"/>
    <property type="match status" value="1"/>
</dbReference>
<dbReference type="SUPFAM" id="SSF101386">
    <property type="entry name" value="all-alpha NTP pyrophosphatases"/>
    <property type="match status" value="1"/>
</dbReference>
<dbReference type="SUPFAM" id="SSF141734">
    <property type="entry name" value="HisI-like"/>
    <property type="match status" value="1"/>
</dbReference>
<feature type="chain" id="PRO_0000136453" description="Histidine biosynthesis bifunctional protein HisIE">
    <location>
        <begin position="1"/>
        <end position="206"/>
    </location>
</feature>
<feature type="region of interest" description="Phosphoribosyl-AMP cyclohydrolase">
    <location>
        <begin position="1"/>
        <end position="117"/>
    </location>
</feature>
<feature type="region of interest" description="Phosphoribosyl-ATP pyrophosphohydrolase">
    <location>
        <begin position="118"/>
        <end position="206"/>
    </location>
</feature>
<sequence>MCNEPATSDVALPDLDWAKGDGLLPVIVQDADTLRVLMLGYMNSQALEVTQRSRLVTFYSRSKQRLWTKGERSGHVLHLVAIDADCDADTLLVQARPRGPTCHLGRTSCFPAAPGQFLGALDALVAERERERPQDSYTTALFEQGVRRIAQKVGEEGVETALAGVVQADDALLDESADLLYHLIVLLRARGLSLADAVTVLEARHR</sequence>